<name>RL7_PROMP</name>
<comment type="function">
    <text evidence="1">Forms part of the ribosomal stalk which helps the ribosome interact with GTP-bound translation factors. Is thus essential for accurate translation.</text>
</comment>
<comment type="subunit">
    <text evidence="1">Homodimer. Part of the ribosomal stalk of the 50S ribosomal subunit. Forms a multimeric L10(L12)X complex, where L10 forms an elongated spine to which 2 to 4 L12 dimers bind in a sequential fashion. Binds GTP-bound translation factors.</text>
</comment>
<comment type="similarity">
    <text evidence="1">Belongs to the bacterial ribosomal protein bL12 family.</text>
</comment>
<keyword id="KW-0687">Ribonucleoprotein</keyword>
<keyword id="KW-0689">Ribosomal protein</keyword>
<reference key="1">
    <citation type="journal article" date="2003" name="Nature">
        <title>Genome divergence in two Prochlorococcus ecotypes reflects oceanic niche differentiation.</title>
        <authorList>
            <person name="Rocap G."/>
            <person name="Larimer F.W."/>
            <person name="Lamerdin J.E."/>
            <person name="Malfatti S."/>
            <person name="Chain P."/>
            <person name="Ahlgren N.A."/>
            <person name="Arellano A."/>
            <person name="Coleman M."/>
            <person name="Hauser L."/>
            <person name="Hess W.R."/>
            <person name="Johnson Z.I."/>
            <person name="Land M.L."/>
            <person name="Lindell D."/>
            <person name="Post A.F."/>
            <person name="Regala W."/>
            <person name="Shah M."/>
            <person name="Shaw S.L."/>
            <person name="Steglich C."/>
            <person name="Sullivan M.B."/>
            <person name="Ting C.S."/>
            <person name="Tolonen A."/>
            <person name="Webb E.A."/>
            <person name="Zinser E.R."/>
            <person name="Chisholm S.W."/>
        </authorList>
    </citation>
    <scope>NUCLEOTIDE SEQUENCE [LARGE SCALE GENOMIC DNA]</scope>
    <source>
        <strain>CCMP1986 / NIES-2087 / MED4</strain>
    </source>
</reference>
<protein>
    <recommendedName>
        <fullName evidence="1">Large ribosomal subunit protein bL12</fullName>
    </recommendedName>
    <alternativeName>
        <fullName evidence="2">50S ribosomal protein L7/L12</fullName>
    </alternativeName>
</protein>
<accession>Q7V384</accession>
<evidence type="ECO:0000255" key="1">
    <source>
        <dbReference type="HAMAP-Rule" id="MF_00368"/>
    </source>
</evidence>
<evidence type="ECO:0000305" key="2"/>
<feature type="chain" id="PRO_0000243469" description="Large ribosomal subunit protein bL12">
    <location>
        <begin position="1"/>
        <end position="131"/>
    </location>
</feature>
<proteinExistence type="inferred from homology"/>
<gene>
    <name evidence="1" type="primary">rplL</name>
    <name evidence="1" type="synonym">rpl12</name>
    <name type="ordered locus">PMM0201</name>
</gene>
<sequence>MTAKTEEILDSLKSLSLLEASELVKQIEEAFGVSAAASAGVVMAAPGAGGGDGDGGAAEEKTEFDVILESFDAAAKIKVLKVVRNATGLGLGDAKALVESAPKTVKEGIAKADAETLKKEIEEAGGKVTLK</sequence>
<dbReference type="EMBL" id="BX548174">
    <property type="protein sequence ID" value="CAE18660.1"/>
    <property type="molecule type" value="Genomic_DNA"/>
</dbReference>
<dbReference type="RefSeq" id="WP_011131840.1">
    <property type="nucleotide sequence ID" value="NC_005072.1"/>
</dbReference>
<dbReference type="SMR" id="Q7V384"/>
<dbReference type="STRING" id="59919.PMM0201"/>
<dbReference type="KEGG" id="pmm:PMM0201"/>
<dbReference type="eggNOG" id="COG0222">
    <property type="taxonomic scope" value="Bacteria"/>
</dbReference>
<dbReference type="HOGENOM" id="CLU_086499_3_0_3"/>
<dbReference type="OrthoDB" id="9811748at2"/>
<dbReference type="Proteomes" id="UP000001026">
    <property type="component" value="Chromosome"/>
</dbReference>
<dbReference type="GO" id="GO:0022625">
    <property type="term" value="C:cytosolic large ribosomal subunit"/>
    <property type="evidence" value="ECO:0007669"/>
    <property type="project" value="TreeGrafter"/>
</dbReference>
<dbReference type="GO" id="GO:0003729">
    <property type="term" value="F:mRNA binding"/>
    <property type="evidence" value="ECO:0007669"/>
    <property type="project" value="TreeGrafter"/>
</dbReference>
<dbReference type="GO" id="GO:0003735">
    <property type="term" value="F:structural constituent of ribosome"/>
    <property type="evidence" value="ECO:0007669"/>
    <property type="project" value="InterPro"/>
</dbReference>
<dbReference type="GO" id="GO:0006412">
    <property type="term" value="P:translation"/>
    <property type="evidence" value="ECO:0007669"/>
    <property type="project" value="UniProtKB-UniRule"/>
</dbReference>
<dbReference type="CDD" id="cd00387">
    <property type="entry name" value="Ribosomal_L7_L12"/>
    <property type="match status" value="1"/>
</dbReference>
<dbReference type="FunFam" id="3.30.1390.10:FF:000001">
    <property type="entry name" value="50S ribosomal protein L7/L12"/>
    <property type="match status" value="1"/>
</dbReference>
<dbReference type="Gene3D" id="3.30.1390.10">
    <property type="match status" value="1"/>
</dbReference>
<dbReference type="Gene3D" id="1.20.5.710">
    <property type="entry name" value="Single helix bin"/>
    <property type="match status" value="1"/>
</dbReference>
<dbReference type="HAMAP" id="MF_00368">
    <property type="entry name" value="Ribosomal_bL12"/>
    <property type="match status" value="1"/>
</dbReference>
<dbReference type="InterPro" id="IPR000206">
    <property type="entry name" value="Ribosomal_bL12"/>
</dbReference>
<dbReference type="InterPro" id="IPR013823">
    <property type="entry name" value="Ribosomal_bL12_C"/>
</dbReference>
<dbReference type="InterPro" id="IPR014719">
    <property type="entry name" value="Ribosomal_bL12_C/ClpS-like"/>
</dbReference>
<dbReference type="InterPro" id="IPR008932">
    <property type="entry name" value="Ribosomal_bL12_oligo"/>
</dbReference>
<dbReference type="InterPro" id="IPR036235">
    <property type="entry name" value="Ribosomal_bL12_oligo_N_sf"/>
</dbReference>
<dbReference type="NCBIfam" id="TIGR00855">
    <property type="entry name" value="L12"/>
    <property type="match status" value="1"/>
</dbReference>
<dbReference type="PANTHER" id="PTHR45987">
    <property type="entry name" value="39S RIBOSOMAL PROTEIN L12"/>
    <property type="match status" value="1"/>
</dbReference>
<dbReference type="PANTHER" id="PTHR45987:SF4">
    <property type="entry name" value="LARGE RIBOSOMAL SUBUNIT PROTEIN BL12M"/>
    <property type="match status" value="1"/>
</dbReference>
<dbReference type="Pfam" id="PF00542">
    <property type="entry name" value="Ribosomal_L12"/>
    <property type="match status" value="1"/>
</dbReference>
<dbReference type="Pfam" id="PF16320">
    <property type="entry name" value="Ribosomal_L12_N"/>
    <property type="match status" value="1"/>
</dbReference>
<dbReference type="SUPFAM" id="SSF54736">
    <property type="entry name" value="ClpS-like"/>
    <property type="match status" value="1"/>
</dbReference>
<dbReference type="SUPFAM" id="SSF48300">
    <property type="entry name" value="Ribosomal protein L7/12, oligomerisation (N-terminal) domain"/>
    <property type="match status" value="1"/>
</dbReference>
<organism>
    <name type="scientific">Prochlorococcus marinus subsp. pastoris (strain CCMP1986 / NIES-2087 / MED4)</name>
    <dbReference type="NCBI Taxonomy" id="59919"/>
    <lineage>
        <taxon>Bacteria</taxon>
        <taxon>Bacillati</taxon>
        <taxon>Cyanobacteriota</taxon>
        <taxon>Cyanophyceae</taxon>
        <taxon>Synechococcales</taxon>
        <taxon>Prochlorococcaceae</taxon>
        <taxon>Prochlorococcus</taxon>
    </lineage>
</organism>